<accession>A5LFY3</accession>
<reference key="1">
    <citation type="submission" date="2005-06" db="EMBL/GenBank/DDBJ databases">
        <title>DNA sequences of macaque genes expressed in brain or testis and its evolutionary implications.</title>
        <authorList>
            <consortium name="International consortium for macaque cDNA sequencing and analysis"/>
        </authorList>
    </citation>
    <scope>NUCLEOTIDE SEQUENCE [LARGE SCALE MRNA]</scope>
    <source>
        <tissue>Testis</tissue>
    </source>
</reference>
<protein>
    <recommendedName>
        <fullName>Protein FAM229B</fullName>
    </recommendedName>
</protein>
<name>F229B_MACFA</name>
<comment type="similarity">
    <text evidence="2">Belongs to the FAM229 family.</text>
</comment>
<feature type="chain" id="PRO_0000335817" description="Protein FAM229B">
    <location>
        <begin position="1"/>
        <end position="80"/>
    </location>
</feature>
<feature type="region of interest" description="Disordered" evidence="1">
    <location>
        <begin position="1"/>
        <end position="44"/>
    </location>
</feature>
<organism>
    <name type="scientific">Macaca fascicularis</name>
    <name type="common">Crab-eating macaque</name>
    <name type="synonym">Cynomolgus monkey</name>
    <dbReference type="NCBI Taxonomy" id="9541"/>
    <lineage>
        <taxon>Eukaryota</taxon>
        <taxon>Metazoa</taxon>
        <taxon>Chordata</taxon>
        <taxon>Craniata</taxon>
        <taxon>Vertebrata</taxon>
        <taxon>Euteleostomi</taxon>
        <taxon>Mammalia</taxon>
        <taxon>Eutheria</taxon>
        <taxon>Euarchontoglires</taxon>
        <taxon>Primates</taxon>
        <taxon>Haplorrhini</taxon>
        <taxon>Catarrhini</taxon>
        <taxon>Cercopithecidae</taxon>
        <taxon>Cercopithecinae</taxon>
        <taxon>Macaca</taxon>
    </lineage>
</organism>
<proteinExistence type="inferred from homology"/>
<evidence type="ECO:0000256" key="1">
    <source>
        <dbReference type="SAM" id="MobiDB-lite"/>
    </source>
</evidence>
<evidence type="ECO:0000305" key="2"/>
<sequence>MPFRFGTQPRRFPVEGGDSSIGLEPGLSSSAACNGKEMSPTRQLRRCPGSHCLTITDVPITVYATMRKPPAQSSKEMHPK</sequence>
<keyword id="KW-1185">Reference proteome</keyword>
<gene>
    <name type="primary">FAM229B</name>
    <name type="ORF">QtsA-19618</name>
</gene>
<dbReference type="EMBL" id="AB169392">
    <property type="protein sequence ID" value="BAF63668.1"/>
    <property type="molecule type" value="mRNA"/>
</dbReference>
<dbReference type="RefSeq" id="XP_005551670.1">
    <property type="nucleotide sequence ID" value="XM_005551613.4"/>
</dbReference>
<dbReference type="RefSeq" id="XP_005551671.1">
    <property type="nucleotide sequence ID" value="XM_005551614.4"/>
</dbReference>
<dbReference type="RefSeq" id="XP_005551672.1">
    <property type="nucleotide sequence ID" value="XM_005551615.3"/>
</dbReference>
<dbReference type="RefSeq" id="XP_005551673.1">
    <property type="nucleotide sequence ID" value="XM_005551616.4"/>
</dbReference>
<dbReference type="RefSeq" id="XP_005551674.1">
    <property type="nucleotide sequence ID" value="XM_005551617.2"/>
</dbReference>
<dbReference type="RefSeq" id="XP_005551675.1">
    <property type="nucleotide sequence ID" value="XM_005551618.2"/>
</dbReference>
<dbReference type="RefSeq" id="XP_015304054.1">
    <property type="nucleotide sequence ID" value="XM_015448568.1"/>
</dbReference>
<dbReference type="RefSeq" id="XP_015304055.1">
    <property type="nucleotide sequence ID" value="XM_015448569.1"/>
</dbReference>
<dbReference type="RefSeq" id="XP_015304056.1">
    <property type="nucleotide sequence ID" value="XM_015448570.1"/>
</dbReference>
<dbReference type="RefSeq" id="XP_015304057.1">
    <property type="nucleotide sequence ID" value="XM_015448571.1"/>
</dbReference>
<dbReference type="RefSeq" id="XP_045247585.1">
    <property type="nucleotide sequence ID" value="XM_045391650.2"/>
</dbReference>
<dbReference type="RefSeq" id="XP_045247586.1">
    <property type="nucleotide sequence ID" value="XM_045391651.2"/>
</dbReference>
<dbReference type="Ensembl" id="ENSMFAT00000001837.2">
    <property type="protein sequence ID" value="ENSMFAP00000027651.1"/>
    <property type="gene ID" value="ENSMFAG00000045226.2"/>
</dbReference>
<dbReference type="GeneID" id="101866462"/>
<dbReference type="CTD" id="619208"/>
<dbReference type="VEuPathDB" id="HostDB:ENSMFAG00000045226"/>
<dbReference type="eggNOG" id="ENOG502TEG8">
    <property type="taxonomic scope" value="Eukaryota"/>
</dbReference>
<dbReference type="GeneTree" id="ENSGT00390000017996"/>
<dbReference type="OMA" id="ACNGKET"/>
<dbReference type="Proteomes" id="UP000233100">
    <property type="component" value="Chromosome 4"/>
</dbReference>
<dbReference type="Bgee" id="ENSMFAG00000045226">
    <property type="expression patterns" value="Expressed in pituitary gland and 7 other cell types or tissues"/>
</dbReference>
<dbReference type="InterPro" id="IPR028025">
    <property type="entry name" value="FAM229"/>
</dbReference>
<dbReference type="PANTHER" id="PTHR35355">
    <property type="entry name" value="PROTEIN FAM229A"/>
    <property type="match status" value="1"/>
</dbReference>
<dbReference type="PANTHER" id="PTHR35355:SF2">
    <property type="entry name" value="PROTEIN FAM229B"/>
    <property type="match status" value="1"/>
</dbReference>
<dbReference type="Pfam" id="PF14982">
    <property type="entry name" value="UPF0731"/>
    <property type="match status" value="1"/>
</dbReference>